<comment type="function">
    <text evidence="1">Probably involved in ribonucleotide reductase function.</text>
</comment>
<comment type="similarity">
    <text evidence="1">Belongs to the NrdI family.</text>
</comment>
<proteinExistence type="inferred from homology"/>
<name>NRDI_SALPC</name>
<organism>
    <name type="scientific">Salmonella paratyphi C (strain RKS4594)</name>
    <dbReference type="NCBI Taxonomy" id="476213"/>
    <lineage>
        <taxon>Bacteria</taxon>
        <taxon>Pseudomonadati</taxon>
        <taxon>Pseudomonadota</taxon>
        <taxon>Gammaproteobacteria</taxon>
        <taxon>Enterobacterales</taxon>
        <taxon>Enterobacteriaceae</taxon>
        <taxon>Salmonella</taxon>
    </lineage>
</organism>
<feature type="chain" id="PRO_1000191762" description="Protein NrdI">
    <location>
        <begin position="1"/>
        <end position="136"/>
    </location>
</feature>
<sequence length="136" mass="15324">MSALVYFSSSSENTHRFMQRLGLPATRIPLNERERIQVDEPYILVVPSYGGGGMAGAVPRQVIRFLNDEHNRARIRGVIASGNRNFGDAWGCAGDVIAQKCGVPWLYRFELMGTQRDIDNVRKGVNEFWQQLPRSA</sequence>
<gene>
    <name evidence="1" type="primary">nrdI</name>
    <name type="ordered locus">SPC_2852</name>
</gene>
<reference key="1">
    <citation type="journal article" date="2009" name="PLoS ONE">
        <title>Salmonella paratyphi C: genetic divergence from Salmonella choleraesuis and pathogenic convergence with Salmonella typhi.</title>
        <authorList>
            <person name="Liu W.-Q."/>
            <person name="Feng Y."/>
            <person name="Wang Y."/>
            <person name="Zou Q.-H."/>
            <person name="Chen F."/>
            <person name="Guo J.-T."/>
            <person name="Peng Y.-H."/>
            <person name="Jin Y."/>
            <person name="Li Y.-G."/>
            <person name="Hu S.-N."/>
            <person name="Johnston R.N."/>
            <person name="Liu G.-R."/>
            <person name="Liu S.-L."/>
        </authorList>
    </citation>
    <scope>NUCLEOTIDE SEQUENCE [LARGE SCALE GENOMIC DNA]</scope>
    <source>
        <strain>RKS4594</strain>
    </source>
</reference>
<protein>
    <recommendedName>
        <fullName evidence="1">Protein NrdI</fullName>
    </recommendedName>
</protein>
<dbReference type="EMBL" id="CP000857">
    <property type="protein sequence ID" value="ACN46948.1"/>
    <property type="molecule type" value="Genomic_DNA"/>
</dbReference>
<dbReference type="RefSeq" id="WP_001275401.1">
    <property type="nucleotide sequence ID" value="NC_012125.1"/>
</dbReference>
<dbReference type="SMR" id="C0PWK6"/>
<dbReference type="KEGG" id="sei:SPC_2852"/>
<dbReference type="HOGENOM" id="CLU_114845_0_0_6"/>
<dbReference type="Proteomes" id="UP000001599">
    <property type="component" value="Chromosome"/>
</dbReference>
<dbReference type="GO" id="GO:0010181">
    <property type="term" value="F:FMN binding"/>
    <property type="evidence" value="ECO:0007669"/>
    <property type="project" value="InterPro"/>
</dbReference>
<dbReference type="GO" id="GO:0036211">
    <property type="term" value="P:protein modification process"/>
    <property type="evidence" value="ECO:0007669"/>
    <property type="project" value="InterPro"/>
</dbReference>
<dbReference type="FunFam" id="3.40.50.360:FF:000005">
    <property type="entry name" value="Protein NrdI"/>
    <property type="match status" value="1"/>
</dbReference>
<dbReference type="Gene3D" id="3.40.50.360">
    <property type="match status" value="1"/>
</dbReference>
<dbReference type="HAMAP" id="MF_00128">
    <property type="entry name" value="NrdI"/>
    <property type="match status" value="1"/>
</dbReference>
<dbReference type="InterPro" id="IPR029039">
    <property type="entry name" value="Flavoprotein-like_sf"/>
</dbReference>
<dbReference type="InterPro" id="IPR020852">
    <property type="entry name" value="RNR_Ib_NrdI_bac"/>
</dbReference>
<dbReference type="InterPro" id="IPR004465">
    <property type="entry name" value="RNR_NrdI"/>
</dbReference>
<dbReference type="NCBIfam" id="TIGR00333">
    <property type="entry name" value="nrdI"/>
    <property type="match status" value="1"/>
</dbReference>
<dbReference type="PANTHER" id="PTHR37297">
    <property type="entry name" value="PROTEIN NRDI"/>
    <property type="match status" value="1"/>
</dbReference>
<dbReference type="PANTHER" id="PTHR37297:SF1">
    <property type="entry name" value="PROTEIN NRDI"/>
    <property type="match status" value="1"/>
</dbReference>
<dbReference type="Pfam" id="PF07972">
    <property type="entry name" value="Flavodoxin_NdrI"/>
    <property type="match status" value="1"/>
</dbReference>
<dbReference type="PIRSF" id="PIRSF005087">
    <property type="entry name" value="NrdI"/>
    <property type="match status" value="1"/>
</dbReference>
<dbReference type="SUPFAM" id="SSF52218">
    <property type="entry name" value="Flavoproteins"/>
    <property type="match status" value="1"/>
</dbReference>
<accession>C0PWK6</accession>
<evidence type="ECO:0000255" key="1">
    <source>
        <dbReference type="HAMAP-Rule" id="MF_00128"/>
    </source>
</evidence>